<evidence type="ECO:0000250" key="1"/>
<evidence type="ECO:0000250" key="2">
    <source>
        <dbReference type="UniProtKB" id="Q96PE7"/>
    </source>
</evidence>
<evidence type="ECO:0000250" key="3">
    <source>
        <dbReference type="UniProtKB" id="Q9D1I5"/>
    </source>
</evidence>
<evidence type="ECO:0000255" key="4"/>
<evidence type="ECO:0000255" key="5">
    <source>
        <dbReference type="PROSITE-ProRule" id="PRU01163"/>
    </source>
</evidence>
<evidence type="ECO:0000305" key="6"/>
<protein>
    <recommendedName>
        <fullName evidence="6">Methylmalonyl-CoA epimerase, mitochondrial</fullName>
        <ecNumber evidence="2">5.1.99.1</ecNumber>
    </recommendedName>
    <alternativeName>
        <fullName>DL-methylmalonyl-CoA racemase</fullName>
    </alternativeName>
</protein>
<comment type="function">
    <text evidence="2">Methylmalonyl-CoA epimerase involved in propionyl-CoA metabolism.</text>
</comment>
<comment type="catalytic activity">
    <reaction evidence="2">
        <text>(R)-methylmalonyl-CoA = (S)-methylmalonyl-CoA</text>
        <dbReference type="Rhea" id="RHEA:20553"/>
        <dbReference type="ChEBI" id="CHEBI:57326"/>
        <dbReference type="ChEBI" id="CHEBI:57327"/>
        <dbReference type="EC" id="5.1.99.1"/>
    </reaction>
    <physiologicalReaction direction="right-to-left" evidence="2">
        <dbReference type="Rhea" id="RHEA:20555"/>
    </physiologicalReaction>
</comment>
<comment type="subcellular location">
    <subcellularLocation>
        <location evidence="6">Mitochondrion</location>
    </subcellularLocation>
</comment>
<comment type="similarity">
    <text evidence="6">Belongs to the methylmalonyl-CoA epimerase family.</text>
</comment>
<name>MCEE_BOVIN</name>
<organism>
    <name type="scientific">Bos taurus</name>
    <name type="common">Bovine</name>
    <dbReference type="NCBI Taxonomy" id="9913"/>
    <lineage>
        <taxon>Eukaryota</taxon>
        <taxon>Metazoa</taxon>
        <taxon>Chordata</taxon>
        <taxon>Craniata</taxon>
        <taxon>Vertebrata</taxon>
        <taxon>Euteleostomi</taxon>
        <taxon>Mammalia</taxon>
        <taxon>Eutheria</taxon>
        <taxon>Laurasiatheria</taxon>
        <taxon>Artiodactyla</taxon>
        <taxon>Ruminantia</taxon>
        <taxon>Pecora</taxon>
        <taxon>Bovidae</taxon>
        <taxon>Bovinae</taxon>
        <taxon>Bos</taxon>
    </lineage>
</organism>
<dbReference type="EC" id="5.1.99.1" evidence="2"/>
<dbReference type="EMBL" id="BC112453">
    <property type="protein sequence ID" value="AAI12454.1"/>
    <property type="molecule type" value="mRNA"/>
</dbReference>
<dbReference type="RefSeq" id="NP_001039460.1">
    <property type="nucleotide sequence ID" value="NM_001045995.2"/>
</dbReference>
<dbReference type="SMR" id="Q2KIZ3"/>
<dbReference type="FunCoup" id="Q2KIZ3">
    <property type="interactions" value="1020"/>
</dbReference>
<dbReference type="STRING" id="9913.ENSBTAP00000046594"/>
<dbReference type="PaxDb" id="9913-ENSBTAP00000046594"/>
<dbReference type="PeptideAtlas" id="Q2KIZ3"/>
<dbReference type="GeneID" id="508170"/>
<dbReference type="KEGG" id="bta:508170"/>
<dbReference type="CTD" id="84693"/>
<dbReference type="eggNOG" id="KOG2944">
    <property type="taxonomic scope" value="Eukaryota"/>
</dbReference>
<dbReference type="HOGENOM" id="CLU_046006_5_0_1"/>
<dbReference type="InParanoid" id="Q2KIZ3"/>
<dbReference type="OrthoDB" id="16820at2759"/>
<dbReference type="TreeFam" id="TF313417"/>
<dbReference type="Proteomes" id="UP000009136">
    <property type="component" value="Unplaced"/>
</dbReference>
<dbReference type="GO" id="GO:0005739">
    <property type="term" value="C:mitochondrion"/>
    <property type="evidence" value="ECO:0007669"/>
    <property type="project" value="UniProtKB-SubCell"/>
</dbReference>
<dbReference type="GO" id="GO:0046872">
    <property type="term" value="F:metal ion binding"/>
    <property type="evidence" value="ECO:0007669"/>
    <property type="project" value="UniProtKB-KW"/>
</dbReference>
<dbReference type="GO" id="GO:0004493">
    <property type="term" value="F:methylmalonyl-CoA epimerase activity"/>
    <property type="evidence" value="ECO:0000318"/>
    <property type="project" value="GO_Central"/>
</dbReference>
<dbReference type="GO" id="GO:0046491">
    <property type="term" value="P:L-methylmalonyl-CoA metabolic process"/>
    <property type="evidence" value="ECO:0000318"/>
    <property type="project" value="GO_Central"/>
</dbReference>
<dbReference type="CDD" id="cd07249">
    <property type="entry name" value="MMCE"/>
    <property type="match status" value="1"/>
</dbReference>
<dbReference type="FunFam" id="3.10.180.10:FF:000003">
    <property type="entry name" value="Methylmalonyl-CoA epimerase, mitochondrial"/>
    <property type="match status" value="1"/>
</dbReference>
<dbReference type="Gene3D" id="3.10.180.10">
    <property type="entry name" value="2,3-Dihydroxybiphenyl 1,2-Dioxygenase, domain 1"/>
    <property type="match status" value="1"/>
</dbReference>
<dbReference type="InterPro" id="IPR029068">
    <property type="entry name" value="Glyas_Bleomycin-R_OHBP_Dase"/>
</dbReference>
<dbReference type="InterPro" id="IPR017515">
    <property type="entry name" value="MeMalonyl-CoA_epimerase"/>
</dbReference>
<dbReference type="InterPro" id="IPR051785">
    <property type="entry name" value="MMCE/EMCE_epimerase"/>
</dbReference>
<dbReference type="InterPro" id="IPR037523">
    <property type="entry name" value="VOC"/>
</dbReference>
<dbReference type="NCBIfam" id="TIGR03081">
    <property type="entry name" value="metmalonyl_epim"/>
    <property type="match status" value="1"/>
</dbReference>
<dbReference type="PANTHER" id="PTHR43048">
    <property type="entry name" value="METHYLMALONYL-COA EPIMERASE"/>
    <property type="match status" value="1"/>
</dbReference>
<dbReference type="PANTHER" id="PTHR43048:SF3">
    <property type="entry name" value="METHYLMALONYL-COA EPIMERASE, MITOCHONDRIAL"/>
    <property type="match status" value="1"/>
</dbReference>
<dbReference type="Pfam" id="PF13669">
    <property type="entry name" value="Glyoxalase_4"/>
    <property type="match status" value="1"/>
</dbReference>
<dbReference type="SUPFAM" id="SSF54593">
    <property type="entry name" value="Glyoxalase/Bleomycin resistance protein/Dihydroxybiphenyl dioxygenase"/>
    <property type="match status" value="1"/>
</dbReference>
<dbReference type="PROSITE" id="PS51819">
    <property type="entry name" value="VOC"/>
    <property type="match status" value="1"/>
</dbReference>
<keyword id="KW-0007">Acetylation</keyword>
<keyword id="KW-0170">Cobalt</keyword>
<keyword id="KW-0413">Isomerase</keyword>
<keyword id="KW-0479">Metal-binding</keyword>
<keyword id="KW-0496">Mitochondrion</keyword>
<keyword id="KW-1185">Reference proteome</keyword>
<keyword id="KW-0809">Transit peptide</keyword>
<reference key="1">
    <citation type="submission" date="2006-01" db="EMBL/GenBank/DDBJ databases">
        <authorList>
            <consortium name="NIH - Mammalian Gene Collection (MGC) project"/>
        </authorList>
    </citation>
    <scope>NUCLEOTIDE SEQUENCE [LARGE SCALE MRNA]</scope>
    <source>
        <strain>Crossbred X Angus</strain>
        <tissue>Liver</tissue>
    </source>
</reference>
<accession>Q2KIZ3</accession>
<proteinExistence type="evidence at transcript level"/>
<sequence length="175" mass="18514">MARVLKVAAASAAGLFPRLRTPVSTVRTSASLSSHPGAGPVWNLGRLNHVAVAVPDLEKARAFYKNVLGAEVGEPVPLPEHGVSVVFVNLGNTKMELLHPLGSDSPIAGFLKKNKAGGMHHVCIEVDNINVAVMDLKEKKIRILSEEAKIGAHGKPVIFLHPSDCGGVLVELEQA</sequence>
<feature type="transit peptide" description="Mitochondrion" evidence="4">
    <location>
        <begin position="1"/>
        <end position="35"/>
    </location>
</feature>
<feature type="chain" id="PRO_0000240349" description="Methylmalonyl-CoA epimerase, mitochondrial">
    <location>
        <begin position="36"/>
        <end position="175"/>
    </location>
</feature>
<feature type="domain" description="VOC" evidence="5">
    <location>
        <begin position="46"/>
        <end position="175"/>
    </location>
</feature>
<feature type="binding site" evidence="1">
    <location>
        <position position="49"/>
    </location>
    <ligand>
        <name>Co(2+)</name>
        <dbReference type="ChEBI" id="CHEBI:48828"/>
    </ligand>
</feature>
<feature type="binding site" evidence="1">
    <location>
        <position position="121"/>
    </location>
    <ligand>
        <name>Co(2+)</name>
        <dbReference type="ChEBI" id="CHEBI:48828"/>
    </ligand>
</feature>
<feature type="binding site" evidence="1">
    <location>
        <position position="171"/>
    </location>
    <ligand>
        <name>Co(2+)</name>
        <dbReference type="ChEBI" id="CHEBI:48828"/>
    </ligand>
</feature>
<feature type="modified residue" description="N6-succinyllysine" evidence="3">
    <location>
        <position position="113"/>
    </location>
</feature>
<feature type="modified residue" description="N6-acetyllysine; alternate" evidence="3">
    <location>
        <position position="149"/>
    </location>
</feature>
<feature type="modified residue" description="N6-succinyllysine; alternate" evidence="3">
    <location>
        <position position="149"/>
    </location>
</feature>
<gene>
    <name type="primary">MCEE</name>
</gene>